<comment type="function">
    <text evidence="1">Located on the platform of the 30S subunit, it bridges several disparate RNA helices of the 16S rRNA. Forms part of the Shine-Dalgarno cleft in the 70S ribosome.</text>
</comment>
<comment type="subunit">
    <text evidence="1">Part of the 30S ribosomal subunit. Interacts with proteins S7 and S18. Binds to IF-3.</text>
</comment>
<comment type="similarity">
    <text evidence="1">Belongs to the universal ribosomal protein uS11 family.</text>
</comment>
<gene>
    <name evidence="1" type="primary">rpsK</name>
    <name type="ordered locus">MSMEG_1522</name>
    <name type="ordered locus">MSMEI_1486</name>
</gene>
<evidence type="ECO:0000255" key="1">
    <source>
        <dbReference type="HAMAP-Rule" id="MF_01310"/>
    </source>
</evidence>
<evidence type="ECO:0000256" key="2">
    <source>
        <dbReference type="SAM" id="MobiDB-lite"/>
    </source>
</evidence>
<evidence type="ECO:0000305" key="3"/>
<evidence type="ECO:0007829" key="4">
    <source>
        <dbReference type="PDB" id="5XYU"/>
    </source>
</evidence>
<feature type="chain" id="PRO_0000294796" description="Small ribosomal subunit protein uS11">
    <location>
        <begin position="1"/>
        <end position="138"/>
    </location>
</feature>
<feature type="region of interest" description="Disordered" evidence="2">
    <location>
        <begin position="1"/>
        <end position="32"/>
    </location>
</feature>
<feature type="region of interest" description="Disordered" evidence="2">
    <location>
        <begin position="119"/>
        <end position="138"/>
    </location>
</feature>
<feature type="compositionally biased region" description="Low complexity" evidence="2">
    <location>
        <begin position="1"/>
        <end position="12"/>
    </location>
</feature>
<feature type="compositionally biased region" description="Basic residues" evidence="2">
    <location>
        <begin position="13"/>
        <end position="22"/>
    </location>
</feature>
<feature type="strand" evidence="4">
    <location>
        <begin position="26"/>
        <end position="34"/>
    </location>
</feature>
<feature type="strand" evidence="4">
    <location>
        <begin position="39"/>
        <end position="44"/>
    </location>
</feature>
<feature type="strand" evidence="4">
    <location>
        <begin position="50"/>
        <end position="55"/>
    </location>
</feature>
<feature type="helix" evidence="4">
    <location>
        <begin position="56"/>
        <end position="59"/>
    </location>
</feature>
<feature type="helix" evidence="4">
    <location>
        <begin position="63"/>
        <end position="66"/>
    </location>
</feature>
<feature type="helix" evidence="4">
    <location>
        <begin position="69"/>
        <end position="80"/>
    </location>
</feature>
<feature type="helix" evidence="4">
    <location>
        <begin position="83"/>
        <end position="86"/>
    </location>
</feature>
<feature type="strand" evidence="4">
    <location>
        <begin position="90"/>
        <end position="98"/>
    </location>
</feature>
<feature type="helix" evidence="4">
    <location>
        <begin position="102"/>
        <end position="112"/>
    </location>
</feature>
<feature type="strand" evidence="4">
    <location>
        <begin position="113"/>
        <end position="116"/>
    </location>
</feature>
<dbReference type="EMBL" id="CP000480">
    <property type="protein sequence ID" value="ABK69610.1"/>
    <property type="molecule type" value="Genomic_DNA"/>
</dbReference>
<dbReference type="EMBL" id="CP001663">
    <property type="protein sequence ID" value="AFP37959.1"/>
    <property type="molecule type" value="Genomic_DNA"/>
</dbReference>
<dbReference type="RefSeq" id="WP_003892910.1">
    <property type="nucleotide sequence ID" value="NZ_SIJM01000016.1"/>
</dbReference>
<dbReference type="RefSeq" id="YP_885904.1">
    <property type="nucleotide sequence ID" value="NC_008596.1"/>
</dbReference>
<dbReference type="PDB" id="5O5J">
    <property type="method" value="EM"/>
    <property type="resolution" value="3.45 A"/>
    <property type="chains" value="K=1-138"/>
</dbReference>
<dbReference type="PDB" id="5O61">
    <property type="method" value="EM"/>
    <property type="resolution" value="3.31 A"/>
    <property type="chains" value="BK=1-138"/>
</dbReference>
<dbReference type="PDB" id="5XYU">
    <property type="method" value="EM"/>
    <property type="resolution" value="3.45 A"/>
    <property type="chains" value="K=1-138"/>
</dbReference>
<dbReference type="PDB" id="5ZEB">
    <property type="method" value="EM"/>
    <property type="resolution" value="3.40 A"/>
    <property type="chains" value="k=1-138"/>
</dbReference>
<dbReference type="PDB" id="5ZEP">
    <property type="method" value="EM"/>
    <property type="resolution" value="3.40 A"/>
    <property type="chains" value="k=1-138"/>
</dbReference>
<dbReference type="PDB" id="5ZEU">
    <property type="method" value="EM"/>
    <property type="resolution" value="3.70 A"/>
    <property type="chains" value="k=1-138"/>
</dbReference>
<dbReference type="PDB" id="6DZI">
    <property type="method" value="EM"/>
    <property type="resolution" value="3.46 A"/>
    <property type="chains" value="t=23-137"/>
</dbReference>
<dbReference type="PDB" id="6DZK">
    <property type="method" value="EM"/>
    <property type="resolution" value="3.60 A"/>
    <property type="chains" value="K=1-138"/>
</dbReference>
<dbReference type="PDB" id="8FR8">
    <property type="method" value="EM"/>
    <property type="resolution" value="2.76 A"/>
    <property type="chains" value="m=23-137"/>
</dbReference>
<dbReference type="PDB" id="8V9J">
    <property type="method" value="EM"/>
    <property type="resolution" value="3.10 A"/>
    <property type="chains" value="k=1-138"/>
</dbReference>
<dbReference type="PDB" id="8V9K">
    <property type="method" value="EM"/>
    <property type="resolution" value="3.10 A"/>
    <property type="chains" value="k=1-138"/>
</dbReference>
<dbReference type="PDB" id="8V9L">
    <property type="method" value="EM"/>
    <property type="resolution" value="3.00 A"/>
    <property type="chains" value="k=1-138"/>
</dbReference>
<dbReference type="PDB" id="8VIO">
    <property type="method" value="EM"/>
    <property type="resolution" value="3.26 A"/>
    <property type="chains" value="q=1-138"/>
</dbReference>
<dbReference type="PDB" id="8WHX">
    <property type="method" value="EM"/>
    <property type="resolution" value="2.80 A"/>
    <property type="chains" value="l=1-138"/>
</dbReference>
<dbReference type="PDB" id="8WI7">
    <property type="method" value="EM"/>
    <property type="resolution" value="3.50 A"/>
    <property type="chains" value="l=1-138"/>
</dbReference>
<dbReference type="PDB" id="8WI9">
    <property type="method" value="EM"/>
    <property type="resolution" value="3.50 A"/>
    <property type="chains" value="l=1-138"/>
</dbReference>
<dbReference type="PDB" id="8WIB">
    <property type="method" value="EM"/>
    <property type="resolution" value="3.50 A"/>
    <property type="chains" value="l=1-138"/>
</dbReference>
<dbReference type="PDB" id="8WID">
    <property type="method" value="EM"/>
    <property type="resolution" value="3.50 A"/>
    <property type="chains" value="l=1-138"/>
</dbReference>
<dbReference type="PDB" id="8WIF">
    <property type="method" value="EM"/>
    <property type="resolution" value="2.90 A"/>
    <property type="chains" value="l=1-138"/>
</dbReference>
<dbReference type="PDBsum" id="5O5J"/>
<dbReference type="PDBsum" id="5O61"/>
<dbReference type="PDBsum" id="5XYU"/>
<dbReference type="PDBsum" id="5ZEB"/>
<dbReference type="PDBsum" id="5ZEP"/>
<dbReference type="PDBsum" id="5ZEU"/>
<dbReference type="PDBsum" id="6DZI"/>
<dbReference type="PDBsum" id="6DZK"/>
<dbReference type="PDBsum" id="8FR8"/>
<dbReference type="PDBsum" id="8V9J"/>
<dbReference type="PDBsum" id="8V9K"/>
<dbReference type="PDBsum" id="8V9L"/>
<dbReference type="PDBsum" id="8VIO"/>
<dbReference type="PDBsum" id="8WHX"/>
<dbReference type="PDBsum" id="8WI7"/>
<dbReference type="PDBsum" id="8WI9"/>
<dbReference type="PDBsum" id="8WIB"/>
<dbReference type="PDBsum" id="8WID"/>
<dbReference type="PDBsum" id="8WIF"/>
<dbReference type="EMDB" id="EMD-29397"/>
<dbReference type="EMDB" id="EMD-3748"/>
<dbReference type="EMDB" id="EMD-3751"/>
<dbReference type="EMDB" id="EMD-37551"/>
<dbReference type="EMDB" id="EMD-37559"/>
<dbReference type="EMDB" id="EMD-37561"/>
<dbReference type="EMDB" id="EMD-37562"/>
<dbReference type="EMDB" id="EMD-37564"/>
<dbReference type="EMDB" id="EMD-37565"/>
<dbReference type="EMDB" id="EMD-43074"/>
<dbReference type="EMDB" id="EMD-43075"/>
<dbReference type="EMDB" id="EMD-43076"/>
<dbReference type="EMDB" id="EMD-43267"/>
<dbReference type="EMDB" id="EMD-6790"/>
<dbReference type="EMDB" id="EMD-6920"/>
<dbReference type="EMDB" id="EMD-6921"/>
<dbReference type="EMDB" id="EMD-6923"/>
<dbReference type="EMDB" id="EMD-8932"/>
<dbReference type="EMDB" id="EMD-8934"/>
<dbReference type="SMR" id="A0QSL6"/>
<dbReference type="IntAct" id="A0QSL6">
    <property type="interactions" value="1"/>
</dbReference>
<dbReference type="STRING" id="246196.MSMEG_1522"/>
<dbReference type="PaxDb" id="246196-MSMEI_1486"/>
<dbReference type="GeneID" id="93456364"/>
<dbReference type="KEGG" id="msb:LJ00_07605"/>
<dbReference type="KEGG" id="msg:MSMEI_1486"/>
<dbReference type="KEGG" id="msm:MSMEG_1522"/>
<dbReference type="PATRIC" id="fig|246196.19.peg.1507"/>
<dbReference type="eggNOG" id="COG0100">
    <property type="taxonomic scope" value="Bacteria"/>
</dbReference>
<dbReference type="OrthoDB" id="9806415at2"/>
<dbReference type="Proteomes" id="UP000000757">
    <property type="component" value="Chromosome"/>
</dbReference>
<dbReference type="Proteomes" id="UP000006158">
    <property type="component" value="Chromosome"/>
</dbReference>
<dbReference type="GO" id="GO:1990904">
    <property type="term" value="C:ribonucleoprotein complex"/>
    <property type="evidence" value="ECO:0007669"/>
    <property type="project" value="UniProtKB-KW"/>
</dbReference>
<dbReference type="GO" id="GO:0005840">
    <property type="term" value="C:ribosome"/>
    <property type="evidence" value="ECO:0007669"/>
    <property type="project" value="UniProtKB-KW"/>
</dbReference>
<dbReference type="GO" id="GO:0019843">
    <property type="term" value="F:rRNA binding"/>
    <property type="evidence" value="ECO:0007669"/>
    <property type="project" value="UniProtKB-UniRule"/>
</dbReference>
<dbReference type="GO" id="GO:0003735">
    <property type="term" value="F:structural constituent of ribosome"/>
    <property type="evidence" value="ECO:0007669"/>
    <property type="project" value="InterPro"/>
</dbReference>
<dbReference type="GO" id="GO:0006412">
    <property type="term" value="P:translation"/>
    <property type="evidence" value="ECO:0007669"/>
    <property type="project" value="UniProtKB-UniRule"/>
</dbReference>
<dbReference type="FunFam" id="3.30.420.80:FF:000001">
    <property type="entry name" value="30S ribosomal protein S11"/>
    <property type="match status" value="1"/>
</dbReference>
<dbReference type="Gene3D" id="3.30.420.80">
    <property type="entry name" value="Ribosomal protein S11"/>
    <property type="match status" value="1"/>
</dbReference>
<dbReference type="HAMAP" id="MF_01310">
    <property type="entry name" value="Ribosomal_uS11"/>
    <property type="match status" value="1"/>
</dbReference>
<dbReference type="InterPro" id="IPR001971">
    <property type="entry name" value="Ribosomal_uS11"/>
</dbReference>
<dbReference type="InterPro" id="IPR019981">
    <property type="entry name" value="Ribosomal_uS11_bac-type"/>
</dbReference>
<dbReference type="InterPro" id="IPR018102">
    <property type="entry name" value="Ribosomal_uS11_CS"/>
</dbReference>
<dbReference type="InterPro" id="IPR036967">
    <property type="entry name" value="Ribosomal_uS11_sf"/>
</dbReference>
<dbReference type="NCBIfam" id="NF003698">
    <property type="entry name" value="PRK05309.1"/>
    <property type="match status" value="1"/>
</dbReference>
<dbReference type="NCBIfam" id="TIGR03632">
    <property type="entry name" value="uS11_bact"/>
    <property type="match status" value="1"/>
</dbReference>
<dbReference type="PANTHER" id="PTHR11759">
    <property type="entry name" value="40S RIBOSOMAL PROTEIN S14/30S RIBOSOMAL PROTEIN S11"/>
    <property type="match status" value="1"/>
</dbReference>
<dbReference type="Pfam" id="PF00411">
    <property type="entry name" value="Ribosomal_S11"/>
    <property type="match status" value="1"/>
</dbReference>
<dbReference type="PIRSF" id="PIRSF002131">
    <property type="entry name" value="Ribosomal_S11"/>
    <property type="match status" value="1"/>
</dbReference>
<dbReference type="SUPFAM" id="SSF53137">
    <property type="entry name" value="Translational machinery components"/>
    <property type="match status" value="1"/>
</dbReference>
<dbReference type="PROSITE" id="PS00054">
    <property type="entry name" value="RIBOSOMAL_S11"/>
    <property type="match status" value="1"/>
</dbReference>
<proteinExistence type="evidence at protein level"/>
<sequence length="138" mass="14641">MAQAKKGGTAAKKGQKTRRREKKNVPHGAAHIKSTFNNTIVSITDPQGNVIAWASSGHVGFKGSRKSTPFAAQLAAENAARKAQEHGVKKVDVFVKGPGSGRETAIRSLQAAGLEVGTISDVTPQPHNGCRPPKRRRV</sequence>
<accession>A0QSL6</accession>
<accession>I7G5U0</accession>
<name>RS11_MYCS2</name>
<keyword id="KW-0002">3D-structure</keyword>
<keyword id="KW-1185">Reference proteome</keyword>
<keyword id="KW-0687">Ribonucleoprotein</keyword>
<keyword id="KW-0689">Ribosomal protein</keyword>
<keyword id="KW-0694">RNA-binding</keyword>
<keyword id="KW-0699">rRNA-binding</keyword>
<reference key="1">
    <citation type="submission" date="2006-10" db="EMBL/GenBank/DDBJ databases">
        <authorList>
            <person name="Fleischmann R.D."/>
            <person name="Dodson R.J."/>
            <person name="Haft D.H."/>
            <person name="Merkel J.S."/>
            <person name="Nelson W.C."/>
            <person name="Fraser C.M."/>
        </authorList>
    </citation>
    <scope>NUCLEOTIDE SEQUENCE [LARGE SCALE GENOMIC DNA]</scope>
    <source>
        <strain>ATCC 700084 / mc(2)155</strain>
    </source>
</reference>
<reference key="2">
    <citation type="journal article" date="2007" name="Genome Biol.">
        <title>Interrupted coding sequences in Mycobacterium smegmatis: authentic mutations or sequencing errors?</title>
        <authorList>
            <person name="Deshayes C."/>
            <person name="Perrodou E."/>
            <person name="Gallien S."/>
            <person name="Euphrasie D."/>
            <person name="Schaeffer C."/>
            <person name="Van-Dorsselaer A."/>
            <person name="Poch O."/>
            <person name="Lecompte O."/>
            <person name="Reyrat J.-M."/>
        </authorList>
    </citation>
    <scope>NUCLEOTIDE SEQUENCE [LARGE SCALE GENOMIC DNA]</scope>
    <source>
        <strain>ATCC 700084 / mc(2)155</strain>
    </source>
</reference>
<reference key="3">
    <citation type="journal article" date="2009" name="Genome Res.">
        <title>Ortho-proteogenomics: multiple proteomes investigation through orthology and a new MS-based protocol.</title>
        <authorList>
            <person name="Gallien S."/>
            <person name="Perrodou E."/>
            <person name="Carapito C."/>
            <person name="Deshayes C."/>
            <person name="Reyrat J.-M."/>
            <person name="Van Dorsselaer A."/>
            <person name="Poch O."/>
            <person name="Schaeffer C."/>
            <person name="Lecompte O."/>
        </authorList>
    </citation>
    <scope>NUCLEOTIDE SEQUENCE [LARGE SCALE GENOMIC DNA]</scope>
    <source>
        <strain>ATCC 700084 / mc(2)155</strain>
    </source>
</reference>
<organism>
    <name type="scientific">Mycolicibacterium smegmatis (strain ATCC 700084 / mc(2)155)</name>
    <name type="common">Mycobacterium smegmatis</name>
    <dbReference type="NCBI Taxonomy" id="246196"/>
    <lineage>
        <taxon>Bacteria</taxon>
        <taxon>Bacillati</taxon>
        <taxon>Actinomycetota</taxon>
        <taxon>Actinomycetes</taxon>
        <taxon>Mycobacteriales</taxon>
        <taxon>Mycobacteriaceae</taxon>
        <taxon>Mycolicibacterium</taxon>
    </lineage>
</organism>
<protein>
    <recommendedName>
        <fullName evidence="1">Small ribosomal subunit protein uS11</fullName>
    </recommendedName>
    <alternativeName>
        <fullName evidence="3">30S ribosomal protein S11</fullName>
    </alternativeName>
</protein>